<proteinExistence type="inferred from homology"/>
<comment type="subunit">
    <text evidence="1">Part of the 50S ribosomal subunit.</text>
</comment>
<comment type="similarity">
    <text evidence="1">Belongs to the universal ribosomal protein uL30 family.</text>
</comment>
<name>RL30_PROMH</name>
<keyword id="KW-1185">Reference proteome</keyword>
<keyword id="KW-0687">Ribonucleoprotein</keyword>
<keyword id="KW-0689">Ribosomal protein</keyword>
<dbReference type="EMBL" id="AM942759">
    <property type="protein sequence ID" value="CAR46417.1"/>
    <property type="molecule type" value="Genomic_DNA"/>
</dbReference>
<dbReference type="RefSeq" id="WP_012368690.1">
    <property type="nucleotide sequence ID" value="NC_010554.1"/>
</dbReference>
<dbReference type="SMR" id="B4F1K2"/>
<dbReference type="EnsemblBacteria" id="CAR46417">
    <property type="protein sequence ID" value="CAR46417"/>
    <property type="gene ID" value="PMI3273"/>
</dbReference>
<dbReference type="GeneID" id="6799906"/>
<dbReference type="KEGG" id="pmr:PMI3273"/>
<dbReference type="eggNOG" id="COG1841">
    <property type="taxonomic scope" value="Bacteria"/>
</dbReference>
<dbReference type="HOGENOM" id="CLU_131047_1_4_6"/>
<dbReference type="Proteomes" id="UP000008319">
    <property type="component" value="Chromosome"/>
</dbReference>
<dbReference type="GO" id="GO:0022625">
    <property type="term" value="C:cytosolic large ribosomal subunit"/>
    <property type="evidence" value="ECO:0007669"/>
    <property type="project" value="TreeGrafter"/>
</dbReference>
<dbReference type="GO" id="GO:0003735">
    <property type="term" value="F:structural constituent of ribosome"/>
    <property type="evidence" value="ECO:0007669"/>
    <property type="project" value="InterPro"/>
</dbReference>
<dbReference type="GO" id="GO:0006412">
    <property type="term" value="P:translation"/>
    <property type="evidence" value="ECO:0007669"/>
    <property type="project" value="UniProtKB-UniRule"/>
</dbReference>
<dbReference type="CDD" id="cd01658">
    <property type="entry name" value="Ribosomal_L30"/>
    <property type="match status" value="1"/>
</dbReference>
<dbReference type="FunFam" id="3.30.1390.20:FF:000001">
    <property type="entry name" value="50S ribosomal protein L30"/>
    <property type="match status" value="1"/>
</dbReference>
<dbReference type="Gene3D" id="3.30.1390.20">
    <property type="entry name" value="Ribosomal protein L30, ferredoxin-like fold domain"/>
    <property type="match status" value="1"/>
</dbReference>
<dbReference type="HAMAP" id="MF_01371_B">
    <property type="entry name" value="Ribosomal_uL30_B"/>
    <property type="match status" value="1"/>
</dbReference>
<dbReference type="InterPro" id="IPR036919">
    <property type="entry name" value="Ribo_uL30_ferredoxin-like_sf"/>
</dbReference>
<dbReference type="InterPro" id="IPR005996">
    <property type="entry name" value="Ribosomal_uL30_bac-type"/>
</dbReference>
<dbReference type="InterPro" id="IPR018038">
    <property type="entry name" value="Ribosomal_uL30_CS"/>
</dbReference>
<dbReference type="InterPro" id="IPR016082">
    <property type="entry name" value="Ribosomal_uL30_ferredoxin-like"/>
</dbReference>
<dbReference type="NCBIfam" id="TIGR01308">
    <property type="entry name" value="rpmD_bact"/>
    <property type="match status" value="1"/>
</dbReference>
<dbReference type="PANTHER" id="PTHR15892:SF2">
    <property type="entry name" value="LARGE RIBOSOMAL SUBUNIT PROTEIN UL30M"/>
    <property type="match status" value="1"/>
</dbReference>
<dbReference type="PANTHER" id="PTHR15892">
    <property type="entry name" value="MITOCHONDRIAL RIBOSOMAL PROTEIN L30"/>
    <property type="match status" value="1"/>
</dbReference>
<dbReference type="Pfam" id="PF00327">
    <property type="entry name" value="Ribosomal_L30"/>
    <property type="match status" value="1"/>
</dbReference>
<dbReference type="PIRSF" id="PIRSF002211">
    <property type="entry name" value="Ribosomal_L30_bac-type"/>
    <property type="match status" value="1"/>
</dbReference>
<dbReference type="SUPFAM" id="SSF55129">
    <property type="entry name" value="Ribosomal protein L30p/L7e"/>
    <property type="match status" value="1"/>
</dbReference>
<dbReference type="PROSITE" id="PS00634">
    <property type="entry name" value="RIBOSOMAL_L30"/>
    <property type="match status" value="1"/>
</dbReference>
<sequence>MAKTIKITQTRSLIGRLPKHKATMAGLGLRRIGHTVEREDTPAVRGMINLVSYMVKVEE</sequence>
<organism>
    <name type="scientific">Proteus mirabilis (strain HI4320)</name>
    <dbReference type="NCBI Taxonomy" id="529507"/>
    <lineage>
        <taxon>Bacteria</taxon>
        <taxon>Pseudomonadati</taxon>
        <taxon>Pseudomonadota</taxon>
        <taxon>Gammaproteobacteria</taxon>
        <taxon>Enterobacterales</taxon>
        <taxon>Morganellaceae</taxon>
        <taxon>Proteus</taxon>
    </lineage>
</organism>
<accession>B4F1K2</accession>
<reference key="1">
    <citation type="journal article" date="2008" name="J. Bacteriol.">
        <title>Complete genome sequence of uropathogenic Proteus mirabilis, a master of both adherence and motility.</title>
        <authorList>
            <person name="Pearson M.M."/>
            <person name="Sebaihia M."/>
            <person name="Churcher C."/>
            <person name="Quail M.A."/>
            <person name="Seshasayee A.S."/>
            <person name="Luscombe N.M."/>
            <person name="Abdellah Z."/>
            <person name="Arrosmith C."/>
            <person name="Atkin B."/>
            <person name="Chillingworth T."/>
            <person name="Hauser H."/>
            <person name="Jagels K."/>
            <person name="Moule S."/>
            <person name="Mungall K."/>
            <person name="Norbertczak H."/>
            <person name="Rabbinowitsch E."/>
            <person name="Walker D."/>
            <person name="Whithead S."/>
            <person name="Thomson N.R."/>
            <person name="Rather P.N."/>
            <person name="Parkhill J."/>
            <person name="Mobley H.L.T."/>
        </authorList>
    </citation>
    <scope>NUCLEOTIDE SEQUENCE [LARGE SCALE GENOMIC DNA]</scope>
    <source>
        <strain>HI4320</strain>
    </source>
</reference>
<feature type="chain" id="PRO_1000144703" description="Large ribosomal subunit protein uL30">
    <location>
        <begin position="1"/>
        <end position="59"/>
    </location>
</feature>
<protein>
    <recommendedName>
        <fullName evidence="1">Large ribosomal subunit protein uL30</fullName>
    </recommendedName>
    <alternativeName>
        <fullName evidence="2">50S ribosomal protein L30</fullName>
    </alternativeName>
</protein>
<gene>
    <name evidence="1" type="primary">rpmD</name>
    <name type="ordered locus">PMI3273</name>
</gene>
<evidence type="ECO:0000255" key="1">
    <source>
        <dbReference type="HAMAP-Rule" id="MF_01371"/>
    </source>
</evidence>
<evidence type="ECO:0000305" key="2"/>